<feature type="chain" id="PRO_0000415439" description="Neurobeachin-like protein 2">
    <location>
        <begin position="1"/>
        <end position="2801"/>
    </location>
</feature>
<feature type="domain" description="BEACH-type PH" evidence="3">
    <location>
        <begin position="1986"/>
        <end position="2086"/>
    </location>
</feature>
<feature type="domain" description="BEACH" evidence="2">
    <location>
        <begin position="2099"/>
        <end position="2391"/>
    </location>
</feature>
<feature type="repeat" description="WD 1">
    <location>
        <begin position="2431"/>
        <end position="2468"/>
    </location>
</feature>
<feature type="repeat" description="WD 2">
    <location>
        <begin position="2492"/>
        <end position="2535"/>
    </location>
</feature>
<feature type="repeat" description="WD 3">
    <location>
        <begin position="2538"/>
        <end position="2575"/>
    </location>
</feature>
<feature type="repeat" description="WD 4">
    <location>
        <begin position="2588"/>
        <end position="2626"/>
    </location>
</feature>
<feature type="repeat" description="WD 5">
    <location>
        <begin position="2633"/>
        <end position="2676"/>
    </location>
</feature>
<feature type="repeat" description="WD 6">
    <location>
        <begin position="2684"/>
        <end position="2719"/>
    </location>
</feature>
<feature type="repeat" description="WD 7">
    <location>
        <begin position="2727"/>
        <end position="2762"/>
    </location>
</feature>
<feature type="region of interest" description="Disordered" evidence="4">
    <location>
        <begin position="1379"/>
        <end position="1529"/>
    </location>
</feature>
<feature type="compositionally biased region" description="Acidic residues" evidence="4">
    <location>
        <begin position="1383"/>
        <end position="1393"/>
    </location>
</feature>
<feature type="compositionally biased region" description="Polar residues" evidence="4">
    <location>
        <begin position="1400"/>
        <end position="1413"/>
    </location>
</feature>
<feature type="compositionally biased region" description="Polar residues" evidence="4">
    <location>
        <begin position="1424"/>
        <end position="1437"/>
    </location>
</feature>
<feature type="compositionally biased region" description="Polar residues" evidence="4">
    <location>
        <begin position="1470"/>
        <end position="1481"/>
    </location>
</feature>
<feature type="compositionally biased region" description="Polar residues" evidence="4">
    <location>
        <begin position="1500"/>
        <end position="1528"/>
    </location>
</feature>
<comment type="function">
    <text evidence="5">Involved in thrombopoiesis. Plays a role in the development or secretion of alpha-granules, that contain several growth factors important for platelet biogenesis.</text>
</comment>
<comment type="subcellular location">
    <subcellularLocation>
        <location evidence="1">Endoplasmic reticulum</location>
    </subcellularLocation>
</comment>
<comment type="similarity">
    <text evidence="6">Belongs to the WD repeat neurobeachin family.</text>
</comment>
<keyword id="KW-0256">Endoplasmic reticulum</keyword>
<keyword id="KW-1185">Reference proteome</keyword>
<keyword id="KW-0677">Repeat</keyword>
<keyword id="KW-0853">WD repeat</keyword>
<evidence type="ECO:0000250" key="1"/>
<evidence type="ECO:0000255" key="2">
    <source>
        <dbReference type="PROSITE-ProRule" id="PRU00026"/>
    </source>
</evidence>
<evidence type="ECO:0000255" key="3">
    <source>
        <dbReference type="PROSITE-ProRule" id="PRU01119"/>
    </source>
</evidence>
<evidence type="ECO:0000256" key="4">
    <source>
        <dbReference type="SAM" id="MobiDB-lite"/>
    </source>
</evidence>
<evidence type="ECO:0000269" key="5">
    <source>
    </source>
</evidence>
<evidence type="ECO:0000305" key="6"/>
<gene>
    <name type="primary">nbeal2</name>
</gene>
<sequence length="2801" mass="314490">MASKERLYELWMLYYTKKDVVYLQQWLEAFVASFEKVIDVHSIEPRRLEEWSADVPLLPKEVLVFLSTQLWHSALHMSGQDQSITAPHPLLLIKFFIIICRNMENIDSEKTPGFVFETIKLLNFCLAQLKKQPDDQSTLQAVVQHGLLLCENLFDPYQTWRRRQAGEEVSMLERSKYKFSPLVLPEELPMLFHEYLQDSELIPEPLVVRLVHLQGAVISGCKRNGLLSITPQAVKDLMSVLRSWCLCPASSPQQPRDPQLLRMALRCLTVMIHLLHSSSVNERQVEIRSALDDYFQLLNWNRPPDSQQGDMHAWEDNLITLLEHMLNAIPEILQCSDRPVLQAIFLNNNCFEHILRLIQNSKLYQSNRFKLECEGQCDLTTRLLTESEVEQVWEKGSDCITVHAIRVLTAIMSNSPSAKEVFKERIGYSQLFDVLKSQGQPTKRLLQELMNMAVEGEHSQAMQLGISNEQPLLLLLQWLPDLGSRSLQLLVSQWLAAVCRGTLSCRTVSVEAGLVGSLLEVLSEPPERLDRQCADSLLGLLQDLGSLSLRPCELKSLLKLLRTEPGAPPHPYCGRVVRVLSAMAARGEGGCSALQYFDLTPPMAGIMVPAIQRWPGSAFAFHAWLCLNTDFPPPQHHYSESHLTNMDNTVRMAKGPRRKQLYSFFTASGTGFEAFFTTEEVLVVAVCTKKEYMAVSLPEHPFNDCAWHSVAIVHVPGRRPFGQNVVTVYVDGVQCKTAPLRFPSLNEPFTSCCIGSAGHRTTTTTMTTSPTLPNPPHSPSEMAFAAHTGPPTLLRSQSFPASFAAAAGGRPGGNRESPVHTIQAGLQDTAWGSPSSLGGLLATAFICHEALQPAQARALFTAGPNNVSLFKADGEPSEVNSKLVLYYTPKAFKSQICLDLSPNHLYDGRLTGHRVVNWDVKDVLSSVGGMGALLPLLEQVCLLDQRETVGQETSDLLGPELTSSRGPAGMLLPLGKSSEGRLEKNSVAAFLLMIKNMLRNHPANQESLLQCHGPAIIGAMLGKVPSSMMDMSVLMACQFLLKQVSNEGNNALLSQLYQYLLFDFRIWSRSHFAVCLGHVQYLTTVINEGKLKTRRKYGVQYILDSIRTHYSVEKDGSPLSDERQTVQISLFSLLKDLLKSPTAEELHSVLAYAAIVQDEQQVISVLDVLHTVLKSSPPPREQVVTVLLDRRVEQLYYLLLKTNYGDEARERLFRVMYKVLKSERVHDRNKQLIKLKDSGYLGLVCSFGDVPITMTTVRCLYEQVLATDPTPSFKDLLAVVYLSHRADLSARLEIVRKLFCLIHSNEEYVKQLAHQSGWQDVLTKLYVKESYESRVRSQSNSLSSPTSSLDPVLSRPVFRRDDSVTEDVRQNVYITLAARHEEEYEEEEGETQDASEGFSDLSQSPPSTGQLKNDSLHFKPFDSGDQSSHSSTLSNTVDFPPSRLQEEDEAVYQPLSPFGSPFELELNHQKGPQTPVGSQPETPSPLEHNKTFLGMRPRKSSSLSNVLDDTSYSTEPPTDTISNTSNPQAPEEELCNLLTNIVFSVLWIGTEGSEDVIWRERGQVFSVLTKLGSSCQLVRPPDDIKRSLLEMMLESSLSDLRDSQGVSLPHVPSLLRLLRLLQDFLFAEGTCNHTLWSEKIFEGVVNLLDRLKAWHTTPGSAGSAELKEMSLIGLRIITGYIQQQQNPQVCEMACLKLHSLLQTVLCLSWEEVCFLLGRLGAPLCPANSASDTSAEGLPSPLVPIVRALLDQHADHTTLQEKLPNLPATNGSPSFAQDLQIYCSTAEWQQFYQNHVEPTMQQYELDTFGKSHDLMSNFWNSCFDDLMSTGQRRDKERSDSKAKFQEVIVDPYLKRVRTENSRYHSVQKMINGQQTVVWRHWRSLRRLLSSDRGAWPLRVQPEVKWKLSSAETYSKMRLKLVPNYSFDSHSDASALRDNMGADSPRSSTEPLPLAVAREAKVSDMDDDKLEDEDIVFLEEAEEAEEESQKEKLVLSEDCELITIVAVVPGRLEVTTHHLYFYDGSSEKEETEEGIGFDFKRPLSQLREVHLRRYNLRRSALELFFIDQSHYFINFRKGVRNKVYSRILGLRPPNLFYFGSRSPQELLKASNLTHRWVCREISNFEYLMQLNTIAGRTYNDLSQYPVFPWVLCDYTSAELDLDDPAVFRDLSKPIGVVNPRHAQNVREKYESFEDPTGTIDKFHYGTHYSNAAGVMHYMIRTEPFTSLHIQLQSGKFDCADRQFHSIAAAWQARMESPADVKELIPEFFYFPEFLENMNGFDLGCLQISQEKVNNVLLPPWASSREDFIRKHRKALESEHVSAHLHEWIDLIFGYKQRGPEAVEALNVFYYCTYEGAVDLDAIANETERKALEGIISNFGQTPCQLLKEPHPPRMSAENAFRRAARLDILPPNLFDQLSKLRSFKEVVSDGLALVQAVVPRNQTRSFIIPGSDILVTVSANGMIGTHSWLPYDKNIANYFTFTRDPSVSNPKTQRFLSGPFSPGVEMGSQVLVVSSDGRLLFSGGHWDCSLRVTMLGKAKLVGRICRHIDVVTCLALDLCGIYLISGSRDTTCMVWQVLQQGGFSSGLSPRPIQVLCGHDQEVTCVAISTELDMAISGSKDGTVIVHSVRRGQYLWTLRPPCENCVSAPVAQLEVGMEGHIVMQTVLEGRSAGKERYALHVYSVNGTLLASETLDEKISALYLVPDYLIVGTQQGNLHIRDLYSLNLAVAPLALKVPVRCVSVTKESSHILVGLEDGKLIVVGAGKPEEVRSGQFSRRLWGSTRRISQVSSGETEYNPVEAPAK</sequence>
<reference key="1">
    <citation type="journal article" date="2013" name="Nature">
        <title>The zebrafish reference genome sequence and its relationship to the human genome.</title>
        <authorList>
            <person name="Howe K."/>
            <person name="Clark M.D."/>
            <person name="Torroja C.F."/>
            <person name="Torrance J."/>
            <person name="Berthelot C."/>
            <person name="Muffato M."/>
            <person name="Collins J.E."/>
            <person name="Humphray S."/>
            <person name="McLaren K."/>
            <person name="Matthews L."/>
            <person name="McLaren S."/>
            <person name="Sealy I."/>
            <person name="Caccamo M."/>
            <person name="Churcher C."/>
            <person name="Scott C."/>
            <person name="Barrett J.C."/>
            <person name="Koch R."/>
            <person name="Rauch G.J."/>
            <person name="White S."/>
            <person name="Chow W."/>
            <person name="Kilian B."/>
            <person name="Quintais L.T."/>
            <person name="Guerra-Assuncao J.A."/>
            <person name="Zhou Y."/>
            <person name="Gu Y."/>
            <person name="Yen J."/>
            <person name="Vogel J.H."/>
            <person name="Eyre T."/>
            <person name="Redmond S."/>
            <person name="Banerjee R."/>
            <person name="Chi J."/>
            <person name="Fu B."/>
            <person name="Langley E."/>
            <person name="Maguire S.F."/>
            <person name="Laird G.K."/>
            <person name="Lloyd D."/>
            <person name="Kenyon E."/>
            <person name="Donaldson S."/>
            <person name="Sehra H."/>
            <person name="Almeida-King J."/>
            <person name="Loveland J."/>
            <person name="Trevanion S."/>
            <person name="Jones M."/>
            <person name="Quail M."/>
            <person name="Willey D."/>
            <person name="Hunt A."/>
            <person name="Burton J."/>
            <person name="Sims S."/>
            <person name="McLay K."/>
            <person name="Plumb B."/>
            <person name="Davis J."/>
            <person name="Clee C."/>
            <person name="Oliver K."/>
            <person name="Clark R."/>
            <person name="Riddle C."/>
            <person name="Elliot D."/>
            <person name="Threadgold G."/>
            <person name="Harden G."/>
            <person name="Ware D."/>
            <person name="Begum S."/>
            <person name="Mortimore B."/>
            <person name="Kerry G."/>
            <person name="Heath P."/>
            <person name="Phillimore B."/>
            <person name="Tracey A."/>
            <person name="Corby N."/>
            <person name="Dunn M."/>
            <person name="Johnson C."/>
            <person name="Wood J."/>
            <person name="Clark S."/>
            <person name="Pelan S."/>
            <person name="Griffiths G."/>
            <person name="Smith M."/>
            <person name="Glithero R."/>
            <person name="Howden P."/>
            <person name="Barker N."/>
            <person name="Lloyd C."/>
            <person name="Stevens C."/>
            <person name="Harley J."/>
            <person name="Holt K."/>
            <person name="Panagiotidis G."/>
            <person name="Lovell J."/>
            <person name="Beasley H."/>
            <person name="Henderson C."/>
            <person name="Gordon D."/>
            <person name="Auger K."/>
            <person name="Wright D."/>
            <person name="Collins J."/>
            <person name="Raisen C."/>
            <person name="Dyer L."/>
            <person name="Leung K."/>
            <person name="Robertson L."/>
            <person name="Ambridge K."/>
            <person name="Leongamornlert D."/>
            <person name="McGuire S."/>
            <person name="Gilderthorp R."/>
            <person name="Griffiths C."/>
            <person name="Manthravadi D."/>
            <person name="Nichol S."/>
            <person name="Barker G."/>
            <person name="Whitehead S."/>
            <person name="Kay M."/>
            <person name="Brown J."/>
            <person name="Murnane C."/>
            <person name="Gray E."/>
            <person name="Humphries M."/>
            <person name="Sycamore N."/>
            <person name="Barker D."/>
            <person name="Saunders D."/>
            <person name="Wallis J."/>
            <person name="Babbage A."/>
            <person name="Hammond S."/>
            <person name="Mashreghi-Mohammadi M."/>
            <person name="Barr L."/>
            <person name="Martin S."/>
            <person name="Wray P."/>
            <person name="Ellington A."/>
            <person name="Matthews N."/>
            <person name="Ellwood M."/>
            <person name="Woodmansey R."/>
            <person name="Clark G."/>
            <person name="Cooper J."/>
            <person name="Tromans A."/>
            <person name="Grafham D."/>
            <person name="Skuce C."/>
            <person name="Pandian R."/>
            <person name="Andrews R."/>
            <person name="Harrison E."/>
            <person name="Kimberley A."/>
            <person name="Garnett J."/>
            <person name="Fosker N."/>
            <person name="Hall R."/>
            <person name="Garner P."/>
            <person name="Kelly D."/>
            <person name="Bird C."/>
            <person name="Palmer S."/>
            <person name="Gehring I."/>
            <person name="Berger A."/>
            <person name="Dooley C.M."/>
            <person name="Ersan-Urun Z."/>
            <person name="Eser C."/>
            <person name="Geiger H."/>
            <person name="Geisler M."/>
            <person name="Karotki L."/>
            <person name="Kirn A."/>
            <person name="Konantz J."/>
            <person name="Konantz M."/>
            <person name="Oberlander M."/>
            <person name="Rudolph-Geiger S."/>
            <person name="Teucke M."/>
            <person name="Lanz C."/>
            <person name="Raddatz G."/>
            <person name="Osoegawa K."/>
            <person name="Zhu B."/>
            <person name="Rapp A."/>
            <person name="Widaa S."/>
            <person name="Langford C."/>
            <person name="Yang F."/>
            <person name="Schuster S.C."/>
            <person name="Carter N.P."/>
            <person name="Harrow J."/>
            <person name="Ning Z."/>
            <person name="Herrero J."/>
            <person name="Searle S.M."/>
            <person name="Enright A."/>
            <person name="Geisler R."/>
            <person name="Plasterk R.H."/>
            <person name="Lee C."/>
            <person name="Westerfield M."/>
            <person name="de Jong P.J."/>
            <person name="Zon L.I."/>
            <person name="Postlethwait J.H."/>
            <person name="Nusslein-Volhard C."/>
            <person name="Hubbard T.J."/>
            <person name="Roest Crollius H."/>
            <person name="Rogers J."/>
            <person name="Stemple D.L."/>
        </authorList>
    </citation>
    <scope>NUCLEOTIDE SEQUENCE [LARGE SCALE GENOMIC DNA]</scope>
    <source>
        <strain>Tuebingen</strain>
    </source>
</reference>
<reference key="2">
    <citation type="journal article" date="2011" name="Nat. Genet.">
        <title>Exome sequencing identifies NBEAL2 as the causative gene for gray platelet syndrome.</title>
        <authorList>
            <person name="Albers C.A."/>
            <person name="Cvejic A."/>
            <person name="Favier R."/>
            <person name="Bouwmans E.E."/>
            <person name="Alessi M.C."/>
            <person name="Bertone P."/>
            <person name="Jordan G."/>
            <person name="Kettleborough R.N."/>
            <person name="Kiddle G."/>
            <person name="Kostadima M."/>
            <person name="Read R.J."/>
            <person name="Sipos B."/>
            <person name="Sivapalaratnam S."/>
            <person name="Smethurst P.A."/>
            <person name="Stephens J."/>
            <person name="Voss K."/>
            <person name="Nurden A."/>
            <person name="Rendon A."/>
            <person name="Nurden P."/>
            <person name="Ouwehand W.H."/>
        </authorList>
    </citation>
    <scope>FUNCTION IN THROMBOPOIESIS</scope>
</reference>
<dbReference type="EMBL" id="CU459067">
    <property type="status" value="NOT_ANNOTATED_CDS"/>
    <property type="molecule type" value="Genomic_DNA"/>
</dbReference>
<dbReference type="EMBL" id="CU651675">
    <property type="status" value="NOT_ANNOTATED_CDS"/>
    <property type="molecule type" value="Genomic_DNA"/>
</dbReference>
<dbReference type="EMBL" id="FP102086">
    <property type="status" value="NOT_ANNOTATED_CDS"/>
    <property type="molecule type" value="Genomic_DNA"/>
</dbReference>
<dbReference type="RefSeq" id="XP_003200210.2">
    <property type="nucleotide sequence ID" value="XM_003200162.6"/>
</dbReference>
<dbReference type="SMR" id="E7FAW3"/>
<dbReference type="FunCoup" id="E7FAW3">
    <property type="interactions" value="591"/>
</dbReference>
<dbReference type="STRING" id="7955.ENSDARP00000131859"/>
<dbReference type="PaxDb" id="7955-ENSDARP00000038543"/>
<dbReference type="GeneID" id="100330830"/>
<dbReference type="KEGG" id="dre:100330830"/>
<dbReference type="AGR" id="ZFIN:ZDB-GENE-100922-283"/>
<dbReference type="CTD" id="23218"/>
<dbReference type="ZFIN" id="ZDB-GENE-100922-283">
    <property type="gene designation" value="nbeal2"/>
</dbReference>
<dbReference type="eggNOG" id="KOG1787">
    <property type="taxonomic scope" value="Eukaryota"/>
</dbReference>
<dbReference type="InParanoid" id="E7FAW3"/>
<dbReference type="OrthoDB" id="26681at2759"/>
<dbReference type="PhylomeDB" id="E7FAW3"/>
<dbReference type="TreeFam" id="TF323165"/>
<dbReference type="Reactome" id="R-DRE-6798695">
    <property type="pathway name" value="Neutrophil degranulation"/>
</dbReference>
<dbReference type="PRO" id="PR:E7FAW3"/>
<dbReference type="Proteomes" id="UP000000437">
    <property type="component" value="Chromosome 16"/>
</dbReference>
<dbReference type="GO" id="GO:0005829">
    <property type="term" value="C:cytosol"/>
    <property type="evidence" value="ECO:0000318"/>
    <property type="project" value="GO_Central"/>
</dbReference>
<dbReference type="GO" id="GO:0005783">
    <property type="term" value="C:endoplasmic reticulum"/>
    <property type="evidence" value="ECO:0007669"/>
    <property type="project" value="UniProtKB-SubCell"/>
</dbReference>
<dbReference type="GO" id="GO:0016020">
    <property type="term" value="C:membrane"/>
    <property type="evidence" value="ECO:0000318"/>
    <property type="project" value="GO_Central"/>
</dbReference>
<dbReference type="GO" id="GO:0019901">
    <property type="term" value="F:protein kinase binding"/>
    <property type="evidence" value="ECO:0000318"/>
    <property type="project" value="GO_Central"/>
</dbReference>
<dbReference type="GO" id="GO:0030220">
    <property type="term" value="P:platelet formation"/>
    <property type="evidence" value="ECO:0000315"/>
    <property type="project" value="ZFIN"/>
</dbReference>
<dbReference type="GO" id="GO:0008104">
    <property type="term" value="P:protein localization"/>
    <property type="evidence" value="ECO:0000318"/>
    <property type="project" value="GO_Central"/>
</dbReference>
<dbReference type="CDD" id="cd06071">
    <property type="entry name" value="Beach"/>
    <property type="match status" value="1"/>
</dbReference>
<dbReference type="CDD" id="cd01201">
    <property type="entry name" value="PH_BEACH"/>
    <property type="match status" value="1"/>
</dbReference>
<dbReference type="FunFam" id="1.10.1540.10:FF:000001">
    <property type="entry name" value="neurobeachin isoform X1"/>
    <property type="match status" value="1"/>
</dbReference>
<dbReference type="FunFam" id="2.130.10.10:FF:001375">
    <property type="entry name" value="Neurobeachin-like protein 2"/>
    <property type="match status" value="1"/>
</dbReference>
<dbReference type="FunFam" id="2.30.29.30:FF:000301">
    <property type="entry name" value="Neurobeachin-like protein 2"/>
    <property type="match status" value="1"/>
</dbReference>
<dbReference type="Gene3D" id="1.10.1540.10">
    <property type="entry name" value="BEACH domain"/>
    <property type="match status" value="1"/>
</dbReference>
<dbReference type="Gene3D" id="1.25.10.10">
    <property type="entry name" value="Leucine-rich Repeat Variant"/>
    <property type="match status" value="1"/>
</dbReference>
<dbReference type="Gene3D" id="2.30.29.30">
    <property type="entry name" value="Pleckstrin-homology domain (PH domain)/Phosphotyrosine-binding domain (PTB)"/>
    <property type="match status" value="1"/>
</dbReference>
<dbReference type="Gene3D" id="2.130.10.10">
    <property type="entry name" value="YVTN repeat-like/Quinoprotein amine dehydrogenase"/>
    <property type="match status" value="1"/>
</dbReference>
<dbReference type="InterPro" id="IPR011989">
    <property type="entry name" value="ARM-like"/>
</dbReference>
<dbReference type="InterPro" id="IPR016024">
    <property type="entry name" value="ARM-type_fold"/>
</dbReference>
<dbReference type="InterPro" id="IPR000409">
    <property type="entry name" value="BEACH_dom"/>
</dbReference>
<dbReference type="InterPro" id="IPR036372">
    <property type="entry name" value="BEACH_dom_sf"/>
</dbReference>
<dbReference type="InterPro" id="IPR050865">
    <property type="entry name" value="BEACH_Domain"/>
</dbReference>
<dbReference type="InterPro" id="IPR013320">
    <property type="entry name" value="ConA-like_dom_sf"/>
</dbReference>
<dbReference type="InterPro" id="IPR046851">
    <property type="entry name" value="NBCH_WD40"/>
</dbReference>
<dbReference type="InterPro" id="IPR031570">
    <property type="entry name" value="NBEA/BDCP_DUF4704"/>
</dbReference>
<dbReference type="InterPro" id="IPR046852">
    <property type="entry name" value="Neurobeachin_a-sol"/>
</dbReference>
<dbReference type="InterPro" id="IPR023362">
    <property type="entry name" value="PH-BEACH_dom"/>
</dbReference>
<dbReference type="InterPro" id="IPR011993">
    <property type="entry name" value="PH-like_dom_sf"/>
</dbReference>
<dbReference type="InterPro" id="IPR015943">
    <property type="entry name" value="WD40/YVTN_repeat-like_dom_sf"/>
</dbReference>
<dbReference type="InterPro" id="IPR036322">
    <property type="entry name" value="WD40_repeat_dom_sf"/>
</dbReference>
<dbReference type="InterPro" id="IPR001680">
    <property type="entry name" value="WD40_rpt"/>
</dbReference>
<dbReference type="PANTHER" id="PTHR13743">
    <property type="entry name" value="BEIGE/BEACH-RELATED"/>
    <property type="match status" value="1"/>
</dbReference>
<dbReference type="PANTHER" id="PTHR13743:SF111">
    <property type="entry name" value="NEUROBEACHIN-LIKE PROTEIN 2"/>
    <property type="match status" value="1"/>
</dbReference>
<dbReference type="Pfam" id="PF02138">
    <property type="entry name" value="Beach"/>
    <property type="match status" value="1"/>
</dbReference>
<dbReference type="Pfam" id="PF15787">
    <property type="entry name" value="DUF4704"/>
    <property type="match status" value="1"/>
</dbReference>
<dbReference type="Pfam" id="PF16057">
    <property type="entry name" value="DUF4800"/>
    <property type="match status" value="1"/>
</dbReference>
<dbReference type="Pfam" id="PF20426">
    <property type="entry name" value="NBCH_WD40"/>
    <property type="match status" value="1"/>
</dbReference>
<dbReference type="Pfam" id="PF20425">
    <property type="entry name" value="Neurobeachin"/>
    <property type="match status" value="1"/>
</dbReference>
<dbReference type="Pfam" id="PF14844">
    <property type="entry name" value="PH_BEACH"/>
    <property type="match status" value="1"/>
</dbReference>
<dbReference type="SMART" id="SM01026">
    <property type="entry name" value="Beach"/>
    <property type="match status" value="1"/>
</dbReference>
<dbReference type="SMART" id="SM00320">
    <property type="entry name" value="WD40"/>
    <property type="match status" value="3"/>
</dbReference>
<dbReference type="SUPFAM" id="SSF48371">
    <property type="entry name" value="ARM repeat"/>
    <property type="match status" value="2"/>
</dbReference>
<dbReference type="SUPFAM" id="SSF81837">
    <property type="entry name" value="BEACH domain"/>
    <property type="match status" value="1"/>
</dbReference>
<dbReference type="SUPFAM" id="SSF49899">
    <property type="entry name" value="Concanavalin A-like lectins/glucanases"/>
    <property type="match status" value="1"/>
</dbReference>
<dbReference type="SUPFAM" id="SSF50729">
    <property type="entry name" value="PH domain-like"/>
    <property type="match status" value="1"/>
</dbReference>
<dbReference type="SUPFAM" id="SSF50978">
    <property type="entry name" value="WD40 repeat-like"/>
    <property type="match status" value="1"/>
</dbReference>
<dbReference type="PROSITE" id="PS50197">
    <property type="entry name" value="BEACH"/>
    <property type="match status" value="1"/>
</dbReference>
<dbReference type="PROSITE" id="PS51783">
    <property type="entry name" value="PH_BEACH"/>
    <property type="match status" value="1"/>
</dbReference>
<dbReference type="PROSITE" id="PS50082">
    <property type="entry name" value="WD_REPEATS_2"/>
    <property type="match status" value="2"/>
</dbReference>
<dbReference type="PROSITE" id="PS50294">
    <property type="entry name" value="WD_REPEATS_REGION"/>
    <property type="match status" value="1"/>
</dbReference>
<accession>E7FAW3</accession>
<name>NBEL2_DANRE</name>
<proteinExistence type="evidence at protein level"/>
<organism>
    <name type="scientific">Danio rerio</name>
    <name type="common">Zebrafish</name>
    <name type="synonym">Brachydanio rerio</name>
    <dbReference type="NCBI Taxonomy" id="7955"/>
    <lineage>
        <taxon>Eukaryota</taxon>
        <taxon>Metazoa</taxon>
        <taxon>Chordata</taxon>
        <taxon>Craniata</taxon>
        <taxon>Vertebrata</taxon>
        <taxon>Euteleostomi</taxon>
        <taxon>Actinopterygii</taxon>
        <taxon>Neopterygii</taxon>
        <taxon>Teleostei</taxon>
        <taxon>Ostariophysi</taxon>
        <taxon>Cypriniformes</taxon>
        <taxon>Danionidae</taxon>
        <taxon>Danioninae</taxon>
        <taxon>Danio</taxon>
    </lineage>
</organism>
<protein>
    <recommendedName>
        <fullName>Neurobeachin-like protein 2</fullName>
    </recommendedName>
</protein>